<dbReference type="EMBL" id="AF521645">
    <property type="protein sequence ID" value="AAO16027.1"/>
    <property type="molecule type" value="mRNA"/>
</dbReference>
<dbReference type="EMBL" id="AK018389">
    <property type="protein sequence ID" value="BAB31190.1"/>
    <property type="molecule type" value="mRNA"/>
</dbReference>
<dbReference type="EMBL" id="AK050291">
    <property type="protein sequence ID" value="BAC34169.1"/>
    <property type="molecule type" value="mRNA"/>
</dbReference>
<dbReference type="EMBL" id="BC031505">
    <property type="protein sequence ID" value="AAH31505.1"/>
    <property type="molecule type" value="mRNA"/>
</dbReference>
<dbReference type="CCDS" id="CCDS17314.2">
    <molecule id="Q8K2G4-1"/>
</dbReference>
<dbReference type="RefSeq" id="NP_082086.2">
    <molecule id="Q8K2G4-1"/>
    <property type="nucleotide sequence ID" value="NM_027810.3"/>
</dbReference>
<dbReference type="SMR" id="Q8K2G4"/>
<dbReference type="ComplexPortal" id="CPX-1909">
    <property type="entry name" value="BBSome complex"/>
</dbReference>
<dbReference type="DIP" id="DIP-60353N"/>
<dbReference type="FunCoup" id="Q8K2G4">
    <property type="interactions" value="1043"/>
</dbReference>
<dbReference type="IntAct" id="Q8K2G4">
    <property type="interactions" value="6"/>
</dbReference>
<dbReference type="MINT" id="Q8K2G4"/>
<dbReference type="STRING" id="10090.ENSMUSP00000103791"/>
<dbReference type="GlyGen" id="Q8K2G4">
    <property type="glycosylation" value="1 site"/>
</dbReference>
<dbReference type="iPTMnet" id="Q8K2G4"/>
<dbReference type="PhosphoSitePlus" id="Q8K2G4"/>
<dbReference type="jPOST" id="Q8K2G4"/>
<dbReference type="PaxDb" id="10090-ENSMUSP00000103791"/>
<dbReference type="ProteomicsDB" id="273465">
    <molecule id="Q8K2G4-1"/>
</dbReference>
<dbReference type="ProteomicsDB" id="273466">
    <molecule id="Q8K2G4-2"/>
</dbReference>
<dbReference type="ProteomicsDB" id="273467">
    <molecule id="Q8K2G4-3"/>
</dbReference>
<dbReference type="Pumba" id="Q8K2G4"/>
<dbReference type="Antibodypedia" id="26763">
    <property type="antibodies" value="219 antibodies from 30 providers"/>
</dbReference>
<dbReference type="Ensembl" id="ENSMUST00000040148.11">
    <molecule id="Q8K2G4-2"/>
    <property type="protein sequence ID" value="ENSMUSP00000047273.5"/>
    <property type="gene ID" value="ENSMUSG00000037325.11"/>
</dbReference>
<dbReference type="Ensembl" id="ENSMUST00000108156.9">
    <molecule id="Q8K2G4-1"/>
    <property type="protein sequence ID" value="ENSMUSP00000103791.3"/>
    <property type="gene ID" value="ENSMUSG00000037325.11"/>
</dbReference>
<dbReference type="GeneID" id="71492"/>
<dbReference type="KEGG" id="mmu:71492"/>
<dbReference type="UCSC" id="uc008ozp.2">
    <molecule id="Q8K2G4-2"/>
    <property type="organism name" value="mouse"/>
</dbReference>
<dbReference type="UCSC" id="uc008ozq.2">
    <molecule id="Q8K2G4-1"/>
    <property type="organism name" value="mouse"/>
</dbReference>
<dbReference type="UCSC" id="uc008ozr.1">
    <molecule id="Q8K2G4-3"/>
    <property type="organism name" value="mouse"/>
</dbReference>
<dbReference type="AGR" id="MGI:1918742"/>
<dbReference type="CTD" id="55212"/>
<dbReference type="MGI" id="MGI:1918742">
    <property type="gene designation" value="Bbs7"/>
</dbReference>
<dbReference type="VEuPathDB" id="HostDB:ENSMUSG00000037325"/>
<dbReference type="eggNOG" id="ENOG502QPS5">
    <property type="taxonomic scope" value="Eukaryota"/>
</dbReference>
<dbReference type="GeneTree" id="ENSGT00390000012346"/>
<dbReference type="HOGENOM" id="CLU_018704_1_0_1"/>
<dbReference type="InParanoid" id="Q8K2G4"/>
<dbReference type="OMA" id="KGEGCFK"/>
<dbReference type="OrthoDB" id="414590at2759"/>
<dbReference type="PhylomeDB" id="Q8K2G4"/>
<dbReference type="TreeFam" id="TF315013"/>
<dbReference type="Reactome" id="R-MMU-5620922">
    <property type="pathway name" value="BBSome-mediated cargo-targeting to cilium"/>
</dbReference>
<dbReference type="BioGRID-ORCS" id="71492">
    <property type="hits" value="6 hits in 78 CRISPR screens"/>
</dbReference>
<dbReference type="ChiTaRS" id="Bbs7">
    <property type="organism name" value="mouse"/>
</dbReference>
<dbReference type="PRO" id="PR:Q8K2G4"/>
<dbReference type="Proteomes" id="UP000000589">
    <property type="component" value="Chromosome 3"/>
</dbReference>
<dbReference type="RNAct" id="Q8K2G4">
    <property type="molecule type" value="protein"/>
</dbReference>
<dbReference type="Bgee" id="ENSMUSG00000037325">
    <property type="expression patterns" value="Expressed in retinal neural layer and 205 other cell types or tissues"/>
</dbReference>
<dbReference type="ExpressionAtlas" id="Q8K2G4">
    <property type="expression patterns" value="baseline and differential"/>
</dbReference>
<dbReference type="GO" id="GO:0005930">
    <property type="term" value="C:axoneme"/>
    <property type="evidence" value="ECO:0000314"/>
    <property type="project" value="MGI"/>
</dbReference>
<dbReference type="GO" id="GO:0034464">
    <property type="term" value="C:BBSome"/>
    <property type="evidence" value="ECO:0000314"/>
    <property type="project" value="UniProtKB"/>
</dbReference>
<dbReference type="GO" id="GO:0034451">
    <property type="term" value="C:centriolar satellite"/>
    <property type="evidence" value="ECO:0007669"/>
    <property type="project" value="UniProtKB-SubCell"/>
</dbReference>
<dbReference type="GO" id="GO:0005813">
    <property type="term" value="C:centrosome"/>
    <property type="evidence" value="ECO:0000314"/>
    <property type="project" value="MGI"/>
</dbReference>
<dbReference type="GO" id="GO:0036064">
    <property type="term" value="C:ciliary basal body"/>
    <property type="evidence" value="ECO:0000314"/>
    <property type="project" value="MGI"/>
</dbReference>
<dbReference type="GO" id="GO:0060170">
    <property type="term" value="C:ciliary membrane"/>
    <property type="evidence" value="ECO:0000266"/>
    <property type="project" value="ComplexPortal"/>
</dbReference>
<dbReference type="GO" id="GO:0016020">
    <property type="term" value="C:membrane"/>
    <property type="evidence" value="ECO:0000314"/>
    <property type="project" value="MGI"/>
</dbReference>
<dbReference type="GO" id="GO:0005634">
    <property type="term" value="C:nucleus"/>
    <property type="evidence" value="ECO:0000314"/>
    <property type="project" value="MGI"/>
</dbReference>
<dbReference type="GO" id="GO:0001750">
    <property type="term" value="C:photoreceptor outer segment"/>
    <property type="evidence" value="ECO:0000314"/>
    <property type="project" value="MGI"/>
</dbReference>
<dbReference type="GO" id="GO:0061629">
    <property type="term" value="F:RNA polymerase II-specific DNA-binding transcription factor binding"/>
    <property type="evidence" value="ECO:0000266"/>
    <property type="project" value="MGI"/>
</dbReference>
<dbReference type="GO" id="GO:0007420">
    <property type="term" value="P:brain development"/>
    <property type="evidence" value="ECO:0000316"/>
    <property type="project" value="MGI"/>
</dbReference>
<dbReference type="GO" id="GO:0060271">
    <property type="term" value="P:cilium assembly"/>
    <property type="evidence" value="ECO:0000303"/>
    <property type="project" value="ComplexPortal"/>
</dbReference>
<dbReference type="GO" id="GO:0001654">
    <property type="term" value="P:eye development"/>
    <property type="evidence" value="ECO:0000316"/>
    <property type="project" value="MGI"/>
</dbReference>
<dbReference type="GO" id="GO:0045444">
    <property type="term" value="P:fat cell differentiation"/>
    <property type="evidence" value="ECO:0000270"/>
    <property type="project" value="BHF-UCL"/>
</dbReference>
<dbReference type="GO" id="GO:0007507">
    <property type="term" value="P:heart development"/>
    <property type="evidence" value="ECO:0000316"/>
    <property type="project" value="MGI"/>
</dbReference>
<dbReference type="GO" id="GO:0060173">
    <property type="term" value="P:limb development"/>
    <property type="evidence" value="ECO:0000316"/>
    <property type="project" value="MGI"/>
</dbReference>
<dbReference type="GO" id="GO:1905515">
    <property type="term" value="P:non-motile cilium assembly"/>
    <property type="evidence" value="ECO:0007669"/>
    <property type="project" value="InterPro"/>
</dbReference>
<dbReference type="GO" id="GO:0032436">
    <property type="term" value="P:positive regulation of proteasomal ubiquitin-dependent protein catabolic process"/>
    <property type="evidence" value="ECO:0000266"/>
    <property type="project" value="MGI"/>
</dbReference>
<dbReference type="GO" id="GO:1903929">
    <property type="term" value="P:primary palate development"/>
    <property type="evidence" value="ECO:0000316"/>
    <property type="project" value="MGI"/>
</dbReference>
<dbReference type="GO" id="GO:0008104">
    <property type="term" value="P:protein localization"/>
    <property type="evidence" value="ECO:0000315"/>
    <property type="project" value="MGI"/>
</dbReference>
<dbReference type="GO" id="GO:0015031">
    <property type="term" value="P:protein transport"/>
    <property type="evidence" value="ECO:0007669"/>
    <property type="project" value="UniProtKB-KW"/>
</dbReference>
<dbReference type="GO" id="GO:0006357">
    <property type="term" value="P:regulation of transcription by RNA polymerase II"/>
    <property type="evidence" value="ECO:0000266"/>
    <property type="project" value="MGI"/>
</dbReference>
<dbReference type="GO" id="GO:0007224">
    <property type="term" value="P:smoothened signaling pathway"/>
    <property type="evidence" value="ECO:0000316"/>
    <property type="project" value="MGI"/>
</dbReference>
<dbReference type="InterPro" id="IPR016575">
    <property type="entry name" value="Bardet-Biedl_syndrome_7_prot"/>
</dbReference>
<dbReference type="InterPro" id="IPR056334">
    <property type="entry name" value="BBS7_GAE_dom"/>
</dbReference>
<dbReference type="InterPro" id="IPR056335">
    <property type="entry name" value="BBS7_hairpin"/>
</dbReference>
<dbReference type="InterPro" id="IPR056333">
    <property type="entry name" value="BBS7_pf_dom"/>
</dbReference>
<dbReference type="InterPro" id="IPR056332">
    <property type="entry name" value="Beta-prop_BBS7"/>
</dbReference>
<dbReference type="InterPro" id="IPR036322">
    <property type="entry name" value="WD40_repeat_dom_sf"/>
</dbReference>
<dbReference type="PANTHER" id="PTHR16074">
    <property type="entry name" value="BARDET-BIEDL SYNDROME 7 PROTEIN"/>
    <property type="match status" value="1"/>
</dbReference>
<dbReference type="PANTHER" id="PTHR16074:SF4">
    <property type="entry name" value="BARDET-BIEDL SYNDROME 7 PROTEIN"/>
    <property type="match status" value="1"/>
</dbReference>
<dbReference type="Pfam" id="PF23360">
    <property type="entry name" value="BBS7_GAE"/>
    <property type="match status" value="1"/>
</dbReference>
<dbReference type="Pfam" id="PF23349">
    <property type="entry name" value="BBS7_hp"/>
    <property type="match status" value="1"/>
</dbReference>
<dbReference type="Pfam" id="PF23361">
    <property type="entry name" value="BBS7_pf"/>
    <property type="match status" value="1"/>
</dbReference>
<dbReference type="Pfam" id="PF23743">
    <property type="entry name" value="Beta-prop_BBS7"/>
    <property type="match status" value="1"/>
</dbReference>
<dbReference type="PIRSF" id="PIRSF011091">
    <property type="entry name" value="BBS7"/>
    <property type="match status" value="1"/>
</dbReference>
<dbReference type="SUPFAM" id="SSF50978">
    <property type="entry name" value="WD40 repeat-like"/>
    <property type="match status" value="1"/>
</dbReference>
<keyword id="KW-0007">Acetylation</keyword>
<keyword id="KW-0025">Alternative splicing</keyword>
<keyword id="KW-1003">Cell membrane</keyword>
<keyword id="KW-0966">Cell projection</keyword>
<keyword id="KW-0969">Cilium</keyword>
<keyword id="KW-0970">Cilium biogenesis/degradation</keyword>
<keyword id="KW-0963">Cytoplasm</keyword>
<keyword id="KW-0206">Cytoskeleton</keyword>
<keyword id="KW-0472">Membrane</keyword>
<keyword id="KW-0653">Protein transport</keyword>
<keyword id="KW-1185">Reference proteome</keyword>
<keyword id="KW-0813">Transport</keyword>
<reference key="1">
    <citation type="journal article" date="2003" name="Am. J. Hum. Genet.">
        <title>Identification of a novel Bardet-Biedl syndrome protein, BBS7, that shares structural features with BBS1 and BBS2.</title>
        <authorList>
            <person name="Badano J.L."/>
            <person name="Ansley S.J."/>
            <person name="Leitch C.C."/>
            <person name="Lewis R.A."/>
            <person name="Lupski J.R."/>
            <person name="Katsanis N."/>
        </authorList>
    </citation>
    <scope>NUCLEOTIDE SEQUENCE [MRNA] (ISOFORM 2)</scope>
</reference>
<reference key="2">
    <citation type="journal article" date="2005" name="Science">
        <title>The transcriptional landscape of the mammalian genome.</title>
        <authorList>
            <person name="Carninci P."/>
            <person name="Kasukawa T."/>
            <person name="Katayama S."/>
            <person name="Gough J."/>
            <person name="Frith M.C."/>
            <person name="Maeda N."/>
            <person name="Oyama R."/>
            <person name="Ravasi T."/>
            <person name="Lenhard B."/>
            <person name="Wells C."/>
            <person name="Kodzius R."/>
            <person name="Shimokawa K."/>
            <person name="Bajic V.B."/>
            <person name="Brenner S.E."/>
            <person name="Batalov S."/>
            <person name="Forrest A.R."/>
            <person name="Zavolan M."/>
            <person name="Davis M.J."/>
            <person name="Wilming L.G."/>
            <person name="Aidinis V."/>
            <person name="Allen J.E."/>
            <person name="Ambesi-Impiombato A."/>
            <person name="Apweiler R."/>
            <person name="Aturaliya R.N."/>
            <person name="Bailey T.L."/>
            <person name="Bansal M."/>
            <person name="Baxter L."/>
            <person name="Beisel K.W."/>
            <person name="Bersano T."/>
            <person name="Bono H."/>
            <person name="Chalk A.M."/>
            <person name="Chiu K.P."/>
            <person name="Choudhary V."/>
            <person name="Christoffels A."/>
            <person name="Clutterbuck D.R."/>
            <person name="Crowe M.L."/>
            <person name="Dalla E."/>
            <person name="Dalrymple B.P."/>
            <person name="de Bono B."/>
            <person name="Della Gatta G."/>
            <person name="di Bernardo D."/>
            <person name="Down T."/>
            <person name="Engstrom P."/>
            <person name="Fagiolini M."/>
            <person name="Faulkner G."/>
            <person name="Fletcher C.F."/>
            <person name="Fukushima T."/>
            <person name="Furuno M."/>
            <person name="Futaki S."/>
            <person name="Gariboldi M."/>
            <person name="Georgii-Hemming P."/>
            <person name="Gingeras T.R."/>
            <person name="Gojobori T."/>
            <person name="Green R.E."/>
            <person name="Gustincich S."/>
            <person name="Harbers M."/>
            <person name="Hayashi Y."/>
            <person name="Hensch T.K."/>
            <person name="Hirokawa N."/>
            <person name="Hill D."/>
            <person name="Huminiecki L."/>
            <person name="Iacono M."/>
            <person name="Ikeo K."/>
            <person name="Iwama A."/>
            <person name="Ishikawa T."/>
            <person name="Jakt M."/>
            <person name="Kanapin A."/>
            <person name="Katoh M."/>
            <person name="Kawasawa Y."/>
            <person name="Kelso J."/>
            <person name="Kitamura H."/>
            <person name="Kitano H."/>
            <person name="Kollias G."/>
            <person name="Krishnan S.P."/>
            <person name="Kruger A."/>
            <person name="Kummerfeld S.K."/>
            <person name="Kurochkin I.V."/>
            <person name="Lareau L.F."/>
            <person name="Lazarevic D."/>
            <person name="Lipovich L."/>
            <person name="Liu J."/>
            <person name="Liuni S."/>
            <person name="McWilliam S."/>
            <person name="Madan Babu M."/>
            <person name="Madera M."/>
            <person name="Marchionni L."/>
            <person name="Matsuda H."/>
            <person name="Matsuzawa S."/>
            <person name="Miki H."/>
            <person name="Mignone F."/>
            <person name="Miyake S."/>
            <person name="Morris K."/>
            <person name="Mottagui-Tabar S."/>
            <person name="Mulder N."/>
            <person name="Nakano N."/>
            <person name="Nakauchi H."/>
            <person name="Ng P."/>
            <person name="Nilsson R."/>
            <person name="Nishiguchi S."/>
            <person name="Nishikawa S."/>
            <person name="Nori F."/>
            <person name="Ohara O."/>
            <person name="Okazaki Y."/>
            <person name="Orlando V."/>
            <person name="Pang K.C."/>
            <person name="Pavan W.J."/>
            <person name="Pavesi G."/>
            <person name="Pesole G."/>
            <person name="Petrovsky N."/>
            <person name="Piazza S."/>
            <person name="Reed J."/>
            <person name="Reid J.F."/>
            <person name="Ring B.Z."/>
            <person name="Ringwald M."/>
            <person name="Rost B."/>
            <person name="Ruan Y."/>
            <person name="Salzberg S.L."/>
            <person name="Sandelin A."/>
            <person name="Schneider C."/>
            <person name="Schoenbach C."/>
            <person name="Sekiguchi K."/>
            <person name="Semple C.A."/>
            <person name="Seno S."/>
            <person name="Sessa L."/>
            <person name="Sheng Y."/>
            <person name="Shibata Y."/>
            <person name="Shimada H."/>
            <person name="Shimada K."/>
            <person name="Silva D."/>
            <person name="Sinclair B."/>
            <person name="Sperling S."/>
            <person name="Stupka E."/>
            <person name="Sugiura K."/>
            <person name="Sultana R."/>
            <person name="Takenaka Y."/>
            <person name="Taki K."/>
            <person name="Tammoja K."/>
            <person name="Tan S.L."/>
            <person name="Tang S."/>
            <person name="Taylor M.S."/>
            <person name="Tegner J."/>
            <person name="Teichmann S.A."/>
            <person name="Ueda H.R."/>
            <person name="van Nimwegen E."/>
            <person name="Verardo R."/>
            <person name="Wei C.L."/>
            <person name="Yagi K."/>
            <person name="Yamanishi H."/>
            <person name="Zabarovsky E."/>
            <person name="Zhu S."/>
            <person name="Zimmer A."/>
            <person name="Hide W."/>
            <person name="Bult C."/>
            <person name="Grimmond S.M."/>
            <person name="Teasdale R.D."/>
            <person name="Liu E.T."/>
            <person name="Brusic V."/>
            <person name="Quackenbush J."/>
            <person name="Wahlestedt C."/>
            <person name="Mattick J.S."/>
            <person name="Hume D.A."/>
            <person name="Kai C."/>
            <person name="Sasaki D."/>
            <person name="Tomaru Y."/>
            <person name="Fukuda S."/>
            <person name="Kanamori-Katayama M."/>
            <person name="Suzuki M."/>
            <person name="Aoki J."/>
            <person name="Arakawa T."/>
            <person name="Iida J."/>
            <person name="Imamura K."/>
            <person name="Itoh M."/>
            <person name="Kato T."/>
            <person name="Kawaji H."/>
            <person name="Kawagashira N."/>
            <person name="Kawashima T."/>
            <person name="Kojima M."/>
            <person name="Kondo S."/>
            <person name="Konno H."/>
            <person name="Nakano K."/>
            <person name="Ninomiya N."/>
            <person name="Nishio T."/>
            <person name="Okada M."/>
            <person name="Plessy C."/>
            <person name="Shibata K."/>
            <person name="Shiraki T."/>
            <person name="Suzuki S."/>
            <person name="Tagami M."/>
            <person name="Waki K."/>
            <person name="Watahiki A."/>
            <person name="Okamura-Oho Y."/>
            <person name="Suzuki H."/>
            <person name="Kawai J."/>
            <person name="Hayashizaki Y."/>
        </authorList>
    </citation>
    <scope>NUCLEOTIDE SEQUENCE [LARGE SCALE MRNA] (ISOFORM 3)</scope>
    <scope>NUCLEOTIDE SEQUENCE [LARGE SCALE MRNA] OF 1-584 (ISOFORM 1)</scope>
    <source>
        <strain>C57BL/6J</strain>
        <tissue>Embryonic lung</tissue>
        <tissue>Liver</tissue>
    </source>
</reference>
<reference key="3">
    <citation type="journal article" date="2004" name="Genome Res.">
        <title>The status, quality, and expansion of the NIH full-length cDNA project: the Mammalian Gene Collection (MGC).</title>
        <authorList>
            <consortium name="The MGC Project Team"/>
        </authorList>
    </citation>
    <scope>NUCLEOTIDE SEQUENCE [LARGE SCALE MRNA] (ISOFORM 1)</scope>
    <source>
        <tissue>Mammary tumor</tissue>
    </source>
</reference>
<reference key="4">
    <citation type="journal article" date="2010" name="Cell">
        <title>A tissue-specific atlas of mouse protein phosphorylation and expression.</title>
        <authorList>
            <person name="Huttlin E.L."/>
            <person name="Jedrychowski M.P."/>
            <person name="Elias J.E."/>
            <person name="Goswami T."/>
            <person name="Rad R."/>
            <person name="Beausoleil S.A."/>
            <person name="Villen J."/>
            <person name="Haas W."/>
            <person name="Sowa M.E."/>
            <person name="Gygi S.P."/>
        </authorList>
    </citation>
    <scope>IDENTIFICATION BY MASS SPECTROMETRY [LARGE SCALE ANALYSIS]</scope>
    <source>
        <tissue>Testis</tissue>
    </source>
</reference>
<reference key="5">
    <citation type="journal article" date="2011" name="PLoS Genet.">
        <title>A novel protein LZTFL1 regulates ciliary trafficking of the BBSome and Smoothened.</title>
        <authorList>
            <person name="Seo S."/>
            <person name="Zhang Q."/>
            <person name="Bugge K."/>
            <person name="Breslow D.K."/>
            <person name="Searby C.C."/>
            <person name="Nachury M.V."/>
            <person name="Sheffield V.C."/>
        </authorList>
    </citation>
    <scope>INTERACTION WITH SMO</scope>
    <scope>IDENTIFICATION IN THE BBSOME COMPLEX</scope>
</reference>
<reference key="6">
    <citation type="journal article" date="2014" name="Cell. Mol. Life Sci.">
        <title>The nucleotide-binding proteins Nubp1 and Nubp2 are negative regulators of ciliogenesis.</title>
        <authorList>
            <person name="Kypri E."/>
            <person name="Christodoulou A."/>
            <person name="Maimaris G."/>
            <person name="Lethan M."/>
            <person name="Markaki M."/>
            <person name="Lysandrou C."/>
            <person name="Lederer C.W."/>
            <person name="Tavernarakis N."/>
            <person name="Geimer S."/>
            <person name="Pedersen L.B."/>
            <person name="Santama N."/>
        </authorList>
    </citation>
    <scope>SUBCELLULAR LOCATION</scope>
</reference>
<proteinExistence type="evidence at protein level"/>
<protein>
    <recommendedName>
        <fullName evidence="7">BBSome complex member BBS7</fullName>
    </recommendedName>
    <alternativeName>
        <fullName>BBS2-like protein 1</fullName>
    </alternativeName>
    <alternativeName>
        <fullName>Bardet-Biedl syndrome 7 protein homolog</fullName>
    </alternativeName>
</protein>
<feature type="chain" id="PRO_0000064847" description="BBSome complex member BBS7">
    <location>
        <begin position="1"/>
        <end position="715"/>
    </location>
</feature>
<feature type="modified residue" description="N-acetylmethionine" evidence="2">
    <location>
        <position position="1"/>
    </location>
</feature>
<feature type="splice variant" id="VSP_008851" description="In isoform 2." evidence="5">
    <original>PV</original>
    <variation>VM</variation>
    <location>
        <begin position="56"/>
        <end position="57"/>
    </location>
</feature>
<feature type="splice variant" id="VSP_008852" description="In isoform 3." evidence="6">
    <original>ISGSDLFLSASYIYNHYCDCKDQNYYLSGDKINDVICLPVEKLSRV</original>
    <variation>VLFSFMFTYVSIIHLIKLVYTSRFFWKRNLATGISLFRTWNQYTVD</variation>
    <location>
        <begin position="116"/>
        <end position="161"/>
    </location>
</feature>
<feature type="splice variant" id="VSP_008853" description="In isoform 3." evidence="6">
    <location>
        <begin position="162"/>
        <end position="715"/>
    </location>
</feature>
<evidence type="ECO:0000250" key="1"/>
<evidence type="ECO:0000250" key="2">
    <source>
        <dbReference type="UniProtKB" id="Q8IWZ6"/>
    </source>
</evidence>
<evidence type="ECO:0000269" key="3">
    <source>
    </source>
</evidence>
<evidence type="ECO:0000269" key="4">
    <source>
    </source>
</evidence>
<evidence type="ECO:0000303" key="5">
    <source>
    </source>
</evidence>
<evidence type="ECO:0000303" key="6">
    <source>
    </source>
</evidence>
<evidence type="ECO:0000305" key="7"/>
<comment type="function">
    <text evidence="1">The BBSome complex is thought to function as a coat complex required for sorting of specific membrane proteins to the primary cilia. The BBSome complex is required for ciliogenesis but is dispensable for centriolar satellite function. This ciliogenic function is mediated in part by the Rab8 GDP/GTP exchange factor, which localizes to the basal body and contacts the BBSome. Rab8(GTP) enters the primary cilium and promotes extension of the ciliary membrane. Firstly the BBSome associates with the ciliary membrane and binds to RAB3IP/Rabin8, the guanosyl exchange factor (GEF) for Rab8 and then the Rab8-GTP localizes to the cilium and promotes docking and fusion of carrier vesicles to the base of the ciliary membrane. The BBSome complex, together with the LTZL1, controls SMO ciliary trafficking and contributes to the sonic hedgehog (SHH) pathway regulation. Required for BBSome complex ciliary localization but not for the proper complex assembly (By similarity).</text>
</comment>
<comment type="subunit">
    <text evidence="3">Part of BBSome complex, that contains BBS1, BBS2, BBS4, BBS5, BBS7, BBS8/TTC8, BBS9 and BBIP10. Interacts with BBS2 (via C-terminus). Interacts with CCDC28B. Interacts with SMO; the interaction is indicative for the association of SMO with the BBsome complex to facilitate ciliary localization of SMO.</text>
</comment>
<comment type="subcellular location">
    <subcellularLocation>
        <location evidence="2">Cell projection</location>
        <location evidence="2">Cilium membrane</location>
    </subcellularLocation>
    <subcellularLocation>
        <location evidence="2">Cytoplasm</location>
    </subcellularLocation>
    <subcellularLocation>
        <location evidence="2">Cytoplasm</location>
        <location evidence="2">Cytoskeleton</location>
        <location evidence="2">Microtubule organizing center</location>
        <location evidence="2">Centrosome</location>
        <location evidence="2">Centriolar satellite</location>
    </subcellularLocation>
    <subcellularLocation>
        <location evidence="4">Cytoplasm</location>
        <location evidence="4">Cytoskeleton</location>
        <location evidence="4">Cilium basal body</location>
    </subcellularLocation>
</comment>
<comment type="alternative products">
    <event type="alternative splicing"/>
    <isoform>
        <id>Q8K2G4-1</id>
        <name>1</name>
        <sequence type="displayed"/>
    </isoform>
    <isoform>
        <id>Q8K2G4-2</id>
        <name>2</name>
        <sequence type="described" ref="VSP_008851"/>
    </isoform>
    <isoform>
        <id>Q8K2G4-3</id>
        <name>3</name>
        <sequence type="described" ref="VSP_008852 VSP_008853"/>
    </isoform>
</comment>
<comment type="miscellaneous">
    <molecule>Isoform 2</molecule>
    <text evidence="7">May be due to a competing donor splice site.</text>
</comment>
<comment type="miscellaneous">
    <molecule>Isoform 3</molecule>
    <text evidence="7">Due to intron retention.</text>
</comment>
<organism>
    <name type="scientific">Mus musculus</name>
    <name type="common">Mouse</name>
    <dbReference type="NCBI Taxonomy" id="10090"/>
    <lineage>
        <taxon>Eukaryota</taxon>
        <taxon>Metazoa</taxon>
        <taxon>Chordata</taxon>
        <taxon>Craniata</taxon>
        <taxon>Vertebrata</taxon>
        <taxon>Euteleostomi</taxon>
        <taxon>Mammalia</taxon>
        <taxon>Eutheria</taxon>
        <taxon>Euarchontoglires</taxon>
        <taxon>Glires</taxon>
        <taxon>Rodentia</taxon>
        <taxon>Myomorpha</taxon>
        <taxon>Muroidea</taxon>
        <taxon>Muridae</taxon>
        <taxon>Murinae</taxon>
        <taxon>Mus</taxon>
        <taxon>Mus</taxon>
    </lineage>
</organism>
<accession>Q8K2G4</accession>
<accession>Q8C7G3</accession>
<accession>Q8CH00</accession>
<accession>Q9CXC2</accession>
<sequence length="715" mass="80320">MDLTLSRADYLQVGVTSQKTMKLLPTSRQRATQKVVVGDQDGVVICFGVKKGEAVPVFKTLPGQKISRLELGGAVNTPQEKIFIAAGSEIRGFTKRGKQFLSFETNLTESIKAMYISGSDLFLSASYIYNHYCDCKDQNYYLSGDKINDVICLPVEKLSRVTPVLACQDRVLRVLQGSDVMYEIEVPGPPTVLALHNGDGGDSGEGLLFGTSDGRLGLIQITTSKPIHKWEIRNDKKRGGILCVDSFDIMGDGVKDLLVGRDDGMVEVYSFENANEPVLRFDQMLSESVTSIQGGCVGKDGYDEIVLATYSGWVTGLTTEPTHKESGPGEELKLNQEMQNKISSLRSEIEHLQFKVLQERENYQQSSQSSQAKSTVPSFSINDKFTLNKEDASYSLVLEVRTAIDNVLIQSDVPIDLLDVDKNSAVVSFSSCDTESNDNFLLATYRCQANTTRLELKIRSIEGQYGTLQAYVTPRIQPKTCQVRQYHIKPLSLHQRTHFIDHDRPMNTLTLTGQFSFAEVHSWVVFCLPEVPEKPPAGECATFYFQNTFLDTQLECVYRKGEGVFKSDNISTISILKDVLSKEATKRKINLNISYEINEVSVKHTLKLIHPKLEYQLLLAKKVQLIDALKELQVHEGNTDFLTPEYRCILEEADHLQEEYKKQPAHLERLYGMITDLFIDKFKFKGTNVKTKVPMLLEILDSYDQNTLISFFDAA</sequence>
<gene>
    <name type="primary">Bbs7</name>
    <name type="synonym">Bbs2l1</name>
</gene>
<name>BBS7_MOUSE</name>